<keyword id="KW-0131">Cell cycle</keyword>
<keyword id="KW-0132">Cell division</keyword>
<keyword id="KW-0963">Cytoplasm</keyword>
<keyword id="KW-0206">Cytoskeleton</keyword>
<keyword id="KW-0333">Golgi apparatus</keyword>
<keyword id="KW-0493">Microtubule</keyword>
<keyword id="KW-0498">Mitosis</keyword>
<dbReference type="EMBL" id="AY353854">
    <property type="protein sequence ID" value="AAQ55812.1"/>
    <property type="molecule type" value="mRNA"/>
</dbReference>
<dbReference type="SMR" id="Q6V291"/>
<dbReference type="GO" id="GO:0005813">
    <property type="term" value="C:centrosome"/>
    <property type="evidence" value="ECO:0007669"/>
    <property type="project" value="UniProtKB-SubCell"/>
</dbReference>
<dbReference type="GO" id="GO:0030981">
    <property type="term" value="C:cortical microtubule cytoskeleton"/>
    <property type="evidence" value="ECO:0000250"/>
    <property type="project" value="UniProtKB"/>
</dbReference>
<dbReference type="GO" id="GO:0005794">
    <property type="term" value="C:Golgi apparatus"/>
    <property type="evidence" value="ECO:0007669"/>
    <property type="project" value="UniProtKB-SubCell"/>
</dbReference>
<dbReference type="GO" id="GO:0005874">
    <property type="term" value="C:microtubule"/>
    <property type="evidence" value="ECO:0000250"/>
    <property type="project" value="UniProtKB"/>
</dbReference>
<dbReference type="GO" id="GO:0097431">
    <property type="term" value="C:mitotic spindle pole"/>
    <property type="evidence" value="ECO:0000250"/>
    <property type="project" value="UniProtKB"/>
</dbReference>
<dbReference type="GO" id="GO:0051010">
    <property type="term" value="F:microtubule plus-end binding"/>
    <property type="evidence" value="ECO:0000250"/>
    <property type="project" value="UniProtKB"/>
</dbReference>
<dbReference type="GO" id="GO:0051315">
    <property type="term" value="P:attachment of mitotic spindle microtubules to kinetochore"/>
    <property type="evidence" value="ECO:0000250"/>
    <property type="project" value="UniProtKB"/>
</dbReference>
<dbReference type="GO" id="GO:0051301">
    <property type="term" value="P:cell division"/>
    <property type="evidence" value="ECO:0007669"/>
    <property type="project" value="UniProtKB-KW"/>
</dbReference>
<dbReference type="GO" id="GO:0000132">
    <property type="term" value="P:establishment of mitotic spindle orientation"/>
    <property type="evidence" value="ECO:0000250"/>
    <property type="project" value="UniProtKB"/>
</dbReference>
<dbReference type="GO" id="GO:0031115">
    <property type="term" value="P:negative regulation of microtubule polymerization"/>
    <property type="evidence" value="ECO:0000250"/>
    <property type="project" value="UniProtKB"/>
</dbReference>
<dbReference type="GO" id="GO:1902888">
    <property type="term" value="P:protein localization to astral microtubule"/>
    <property type="evidence" value="ECO:0000250"/>
    <property type="project" value="UniProtKB"/>
</dbReference>
<dbReference type="GO" id="GO:0035372">
    <property type="term" value="P:protein localization to microtubule"/>
    <property type="evidence" value="ECO:0000250"/>
    <property type="project" value="UniProtKB"/>
</dbReference>
<dbReference type="FunFam" id="1.20.5.1430:FF:000001">
    <property type="entry name" value="microtubule-associated protein RP/EB family member 1"/>
    <property type="match status" value="1"/>
</dbReference>
<dbReference type="FunFam" id="1.10.418.10:FF:000007">
    <property type="entry name" value="Microtubule-associated protein, RP/EB family, member 2"/>
    <property type="match status" value="1"/>
</dbReference>
<dbReference type="Gene3D" id="1.20.5.1430">
    <property type="match status" value="1"/>
</dbReference>
<dbReference type="Gene3D" id="1.10.418.10">
    <property type="entry name" value="Calponin-like domain"/>
    <property type="match status" value="1"/>
</dbReference>
<dbReference type="InterPro" id="IPR001715">
    <property type="entry name" value="CH_dom"/>
</dbReference>
<dbReference type="InterPro" id="IPR036872">
    <property type="entry name" value="CH_dom_sf"/>
</dbReference>
<dbReference type="InterPro" id="IPR004953">
    <property type="entry name" value="EB1_C"/>
</dbReference>
<dbReference type="InterPro" id="IPR036133">
    <property type="entry name" value="EB1_C_sf"/>
</dbReference>
<dbReference type="InterPro" id="IPR027328">
    <property type="entry name" value="MAPRE"/>
</dbReference>
<dbReference type="PANTHER" id="PTHR10623">
    <property type="entry name" value="MICROTUBULE-ASSOCIATED PROTEIN RP/EB FAMILY MEMBER"/>
    <property type="match status" value="1"/>
</dbReference>
<dbReference type="Pfam" id="PF00307">
    <property type="entry name" value="CH"/>
    <property type="match status" value="1"/>
</dbReference>
<dbReference type="Pfam" id="PF03271">
    <property type="entry name" value="EB1"/>
    <property type="match status" value="1"/>
</dbReference>
<dbReference type="SUPFAM" id="SSF47576">
    <property type="entry name" value="Calponin-homology domain, CH-domain"/>
    <property type="match status" value="1"/>
</dbReference>
<dbReference type="SUPFAM" id="SSF140612">
    <property type="entry name" value="EB1 dimerisation domain-like"/>
    <property type="match status" value="1"/>
</dbReference>
<dbReference type="PROSITE" id="PS50021">
    <property type="entry name" value="CH"/>
    <property type="match status" value="1"/>
</dbReference>
<dbReference type="PROSITE" id="PS51230">
    <property type="entry name" value="EB1_C"/>
    <property type="match status" value="1"/>
</dbReference>
<feature type="chain" id="PRO_0000213422" description="Microtubule-associated protein RP/EB family member 1">
    <location>
        <begin position="1"/>
        <end position="263"/>
    </location>
</feature>
<feature type="domain" description="Calponin-homology (CH)" evidence="2">
    <location>
        <begin position="14"/>
        <end position="116"/>
    </location>
</feature>
<feature type="domain" description="EB1 C-terminal" evidence="3">
    <location>
        <begin position="180"/>
        <end position="250"/>
    </location>
</feature>
<sequence>MAVNVYSTSVTSDNLSRHDMLAWINESLQLTLTKIEQLCSGAAYCQFMDMLFPGSVALKKVKFQAKLEHEYIQNFKVLQAGFKRMGVDKIIPVDKLVKGKFQDNFEFVQWFKKFFDANYDGKEYDPVAARQGQETVAPNLVAPVMNKPKKPLGTGSAAPQRPIVAQRTPATPKGGTGMVKKAAGDDESAGLIEQINVLKLTVEDLEKERDFYFGKLRNIELICQENEGENDPVLQRIVEILYATDEGFVIPDEGAPQEEQEEY</sequence>
<reference key="1">
    <citation type="journal article" date="2004" name="Poult. Sci.">
        <title>cDNA array analysis of Japanese quail lines divergently selected for four-week body weight.</title>
        <authorList>
            <person name="Mott I.W."/>
            <person name="Ivarie R.D."/>
        </authorList>
    </citation>
    <scope>NUCLEOTIDE SEQUENCE [MRNA]</scope>
</reference>
<comment type="function">
    <text evidence="1">Plus-end tracking protein (+TIP) that binds to the plus-end of microtubules and regulates the dynamics of the microtubule cytoskeleton. Promotes cytoplasmic microtubule nucleation and elongation. Involved in mitotic spindle positioning by stabilizing microtubules and promoting dynamic connection between astral microtubules and the cortex during mitotic chromosome segregation.</text>
</comment>
<comment type="subcellular location">
    <subcellularLocation>
        <location evidence="1">Cytoplasm</location>
        <location evidence="1">Cytoskeleton</location>
    </subcellularLocation>
    <subcellularLocation>
        <location evidence="1">Cytoplasm</location>
        <location evidence="1">Cytoskeleton</location>
        <location evidence="1">Microtubule organizing center</location>
        <location evidence="1">Centrosome</location>
    </subcellularLocation>
    <subcellularLocation>
        <location evidence="1">Golgi apparatus</location>
    </subcellularLocation>
    <subcellularLocation>
        <location evidence="1">Cytoplasm</location>
        <location evidence="1">Cytoskeleton</location>
        <location evidence="1">Spindle</location>
    </subcellularLocation>
    <subcellularLocation>
        <location evidence="1">Cytoplasm</location>
        <location evidence="1">Cytoskeleton</location>
        <location evidence="1">Spindle pole</location>
    </subcellularLocation>
</comment>
<comment type="similarity">
    <text evidence="4">Belongs to the MAPRE family.</text>
</comment>
<evidence type="ECO:0000250" key="1">
    <source>
        <dbReference type="UniProtKB" id="Q15691"/>
    </source>
</evidence>
<evidence type="ECO:0000255" key="2">
    <source>
        <dbReference type="PROSITE-ProRule" id="PRU00044"/>
    </source>
</evidence>
<evidence type="ECO:0000255" key="3">
    <source>
        <dbReference type="PROSITE-ProRule" id="PRU00576"/>
    </source>
</evidence>
<evidence type="ECO:0000305" key="4"/>
<accession>Q6V291</accession>
<protein>
    <recommendedName>
        <fullName>Microtubule-associated protein RP/EB family member 1</fullName>
    </recommendedName>
</protein>
<proteinExistence type="evidence at transcript level"/>
<name>MARE1_COTCO</name>
<organism>
    <name type="scientific">Coturnix coturnix</name>
    <name type="common">Common quail</name>
    <name type="synonym">Tetrao coturnix</name>
    <dbReference type="NCBI Taxonomy" id="9091"/>
    <lineage>
        <taxon>Eukaryota</taxon>
        <taxon>Metazoa</taxon>
        <taxon>Chordata</taxon>
        <taxon>Craniata</taxon>
        <taxon>Vertebrata</taxon>
        <taxon>Euteleostomi</taxon>
        <taxon>Archelosauria</taxon>
        <taxon>Archosauria</taxon>
        <taxon>Dinosauria</taxon>
        <taxon>Saurischia</taxon>
        <taxon>Theropoda</taxon>
        <taxon>Coelurosauria</taxon>
        <taxon>Aves</taxon>
        <taxon>Neognathae</taxon>
        <taxon>Galloanserae</taxon>
        <taxon>Galliformes</taxon>
        <taxon>Phasianidae</taxon>
        <taxon>Perdicinae</taxon>
        <taxon>Coturnix</taxon>
    </lineage>
</organism>
<gene>
    <name type="primary">MAPRE1</name>
</gene>